<proteinExistence type="evidence at protein level"/>
<accession>P02381</accession>
<accession>A0A0A7NYM3</accession>
<accession>A2KBL8</accession>
<accession>Q95946</accession>
<accession>Q9ZZW5</accession>
<gene>
    <name type="primary">VAR1</name>
    <name type="ordered locus">Q0140</name>
</gene>
<name>RMAR_YEAST</name>
<protein>
    <recommendedName>
        <fullName evidence="7">Small ribosomal subunit protein uS3m</fullName>
    </recommendedName>
    <alternativeName>
        <fullName>Ribosomal protein VAR1, mitochondrial</fullName>
    </alternativeName>
</protein>
<comment type="function">
    <text evidence="6 9 10">Component of the mitochondrial ribosome (mitoribosome), a dedicated translation machinery responsible for the synthesis of mitochondrial genome-encoded proteins, including at least some of the essential transmembrane subunits of the mitochondrial respiratory chain. The mitoribosomes are attached to the mitochondrial inner membrane and translation products are cotranslationally integrated into the membrane (PubMed:25609543, PubMed:28154081). uS3m is essential for mitochondrial protein synthesis and required for the maturation of small ribosomal subunits (PubMed:7770043).</text>
</comment>
<comment type="subunit">
    <text evidence="1 2 5">Component of the mitochondrial small ribosomal subunit (mt-SSU). Mature yeast 74S mitochondrial ribosomes consist of a small (37S) and a large (54S) subunit. The 37S small subunit contains a 15S ribosomal RNA (15S mt-rRNA) and 34 different proteins. The 54S large subunit contains a 21S rRNA (21S mt-rRNA) and 46 different proteins. uS3m, uS4m and uS5m form the narrow entry site of the mRNA channel.</text>
</comment>
<comment type="subcellular location">
    <subcellularLocation>
        <location evidence="3">Mitochondrion</location>
    </subcellularLocation>
    <text evidence="4">Mitoribosomes are tethered to the mitochondrial inner membrane and spatially aligned with the membrane insertion machinery through two distinct membrane contact sites, formed by the 21S rRNA expansion segment 96-ES1 and the inner membrane protein MBA1.</text>
</comment>
<comment type="similarity">
    <text evidence="8">Belongs to the universal ribosomal protein uS3 family.</text>
</comment>
<feature type="chain" id="PRO_0000220076" description="Small ribosomal subunit protein uS3m">
    <location>
        <begin position="1"/>
        <end position="398"/>
    </location>
</feature>
<feature type="sequence conflict" description="In Ref. 1; CAA24077 and 3; CAA09218." evidence="8" ref="1 3">
    <location>
        <begin position="169"/>
        <end position="170"/>
    </location>
</feature>
<feature type="sequence conflict" description="In Ref. 1; CAA24077, 2; AAA67536 and 3; CAA09218." evidence="8" ref="1 2 3">
    <original>K</original>
    <variation>N</variation>
    <location>
        <position position="200"/>
    </location>
</feature>
<feature type="sequence conflict" description="In Ref. 2; AAA67536." evidence="8" ref="2">
    <original>N</original>
    <variation>NNNNNNN</variation>
    <location>
        <position position="284"/>
    </location>
</feature>
<feature type="helix" evidence="11">
    <location>
        <begin position="33"/>
        <end position="57"/>
    </location>
</feature>
<feature type="turn" evidence="11">
    <location>
        <begin position="58"/>
        <end position="61"/>
    </location>
</feature>
<feature type="helix" evidence="11">
    <location>
        <begin position="89"/>
        <end position="92"/>
    </location>
</feature>
<feature type="strand" evidence="11">
    <location>
        <begin position="93"/>
        <end position="96"/>
    </location>
</feature>
<feature type="helix" evidence="11">
    <location>
        <begin position="102"/>
        <end position="121"/>
    </location>
</feature>
<feature type="strand" evidence="11">
    <location>
        <begin position="124"/>
        <end position="128"/>
    </location>
</feature>
<feature type="strand" evidence="11">
    <location>
        <begin position="132"/>
        <end position="134"/>
    </location>
</feature>
<feature type="strand" evidence="11">
    <location>
        <begin position="141"/>
        <end position="144"/>
    </location>
</feature>
<feature type="strand" evidence="11">
    <location>
        <begin position="149"/>
        <end position="156"/>
    </location>
</feature>
<feature type="helix" evidence="11">
    <location>
        <begin position="169"/>
        <end position="171"/>
    </location>
</feature>
<feature type="helix" evidence="11">
    <location>
        <begin position="175"/>
        <end position="184"/>
    </location>
</feature>
<feature type="strand" evidence="11">
    <location>
        <begin position="187"/>
        <end position="189"/>
    </location>
</feature>
<feature type="helix" evidence="11">
    <location>
        <begin position="191"/>
        <end position="199"/>
    </location>
</feature>
<feature type="strand" evidence="11">
    <location>
        <begin position="203"/>
        <end position="209"/>
    </location>
</feature>
<feature type="strand" evidence="11">
    <location>
        <begin position="211"/>
        <end position="213"/>
    </location>
</feature>
<feature type="helix" evidence="11">
    <location>
        <begin position="217"/>
        <end position="225"/>
    </location>
</feature>
<feature type="helix" evidence="11">
    <location>
        <begin position="254"/>
        <end position="280"/>
    </location>
</feature>
<feature type="helix" evidence="11">
    <location>
        <begin position="302"/>
        <end position="305"/>
    </location>
</feature>
<feature type="turn" evidence="11">
    <location>
        <begin position="306"/>
        <end position="308"/>
    </location>
</feature>
<feature type="turn" evidence="11">
    <location>
        <begin position="311"/>
        <end position="313"/>
    </location>
</feature>
<feature type="helix" evidence="11">
    <location>
        <begin position="314"/>
        <end position="318"/>
    </location>
</feature>
<feature type="strand" evidence="11">
    <location>
        <begin position="323"/>
        <end position="328"/>
    </location>
</feature>
<feature type="strand" evidence="11">
    <location>
        <begin position="394"/>
        <end position="397"/>
    </location>
</feature>
<evidence type="ECO:0000269" key="1">
    <source>
    </source>
</evidence>
<evidence type="ECO:0000269" key="2">
    <source>
    </source>
</evidence>
<evidence type="ECO:0000269" key="3">
    <source>
    </source>
</evidence>
<evidence type="ECO:0000269" key="4">
    <source>
    </source>
</evidence>
<evidence type="ECO:0000269" key="5">
    <source>
    </source>
</evidence>
<evidence type="ECO:0000269" key="6">
    <source>
    </source>
</evidence>
<evidence type="ECO:0000303" key="7">
    <source>
    </source>
</evidence>
<evidence type="ECO:0000305" key="8"/>
<evidence type="ECO:0000305" key="9">
    <source>
    </source>
</evidence>
<evidence type="ECO:0000305" key="10">
    <source>
    </source>
</evidence>
<evidence type="ECO:0007829" key="11">
    <source>
        <dbReference type="PDB" id="8D8L"/>
    </source>
</evidence>
<geneLocation type="mitochondrion"/>
<reference key="1">
    <citation type="journal article" date="1982" name="Cell">
        <title>Location and structure of the var1 gene on yeast mitochondrial DNA: nucleotide sequence of the 40.0 allele.</title>
        <authorList>
            <person name="Hudspeth M.E.S."/>
            <person name="Ainley W.M."/>
            <person name="Shumard D.S."/>
            <person name="Butow R.A."/>
            <person name="Grossman L.I."/>
        </authorList>
    </citation>
    <scope>NUCLEOTIDE SEQUENCE [GENOMIC DNA]</scope>
</reference>
<reference key="2">
    <citation type="journal article" date="1986" name="Gene">
        <title>The primary structure of the mitochondrial genome of Saccharomyces cerevisiae -- a review.</title>
        <authorList>
            <person name="de Zamaroczy M."/>
            <person name="Bernardi G."/>
        </authorList>
    </citation>
    <scope>NUCLEOTIDE SEQUENCE [GENOMIC DNA]</scope>
</reference>
<reference key="3">
    <citation type="journal article" date="1998" name="EMBO J.">
        <title>Accumulation of mitochondrially synthesized Saccharomyces cerevisiae Cox2p and Cox3p depends on targeting information in untranslated portions of their mRNAs.</title>
        <authorList>
            <person name="Sanchirico M.E."/>
            <person name="Fox T.D."/>
            <person name="Mason T.L."/>
        </authorList>
    </citation>
    <scope>NUCLEOTIDE SEQUENCE [GENOMIC DNA]</scope>
</reference>
<reference key="4">
    <citation type="journal article" date="1998" name="FEBS Lett.">
        <title>The complete sequence of the mitochondrial genome of Saccharomyces cerevisiae.</title>
        <authorList>
            <person name="Foury F."/>
            <person name="Roganti T."/>
            <person name="Lecrenier N."/>
            <person name="Purnelle B."/>
        </authorList>
    </citation>
    <scope>NUCLEOTIDE SEQUENCE [LARGE SCALE GENOMIC DNA]</scope>
    <source>
        <strain>ATCC 96604 / S288c / FY1679</strain>
    </source>
</reference>
<reference key="5">
    <citation type="journal article" date="2014" name="G3 (Bethesda)">
        <title>The reference genome sequence of Saccharomyces cerevisiae: Then and now.</title>
        <authorList>
            <person name="Engel S.R."/>
            <person name="Dietrich F.S."/>
            <person name="Fisk D.G."/>
            <person name="Binkley G."/>
            <person name="Balakrishnan R."/>
            <person name="Costanzo M.C."/>
            <person name="Dwight S.S."/>
            <person name="Hitz B.C."/>
            <person name="Karra K."/>
            <person name="Nash R.S."/>
            <person name="Weng S."/>
            <person name="Wong E.D."/>
            <person name="Lloyd P."/>
            <person name="Skrzypek M.S."/>
            <person name="Miyasato S.R."/>
            <person name="Simison M."/>
            <person name="Cherry J.M."/>
        </authorList>
    </citation>
    <scope>GENOME REANNOTATION</scope>
    <source>
        <strain>ATCC 96604 / S288c / FY1679</strain>
    </source>
</reference>
<reference key="6">
    <citation type="journal article" date="1995" name="Mol. Gen. Genet.">
        <title>Incorporation of the yeast mitochondrial ribosomal protein Mrp2 into ribosomal subunits requires the mitochondrially encoded Var1 protein.</title>
        <authorList>
            <person name="Davis S.C."/>
            <person name="Ellis S.R."/>
        </authorList>
    </citation>
    <scope>FUNCTION</scope>
</reference>
<reference key="7">
    <citation type="journal article" date="2001" name="J. Biol. Chem.">
        <title>Identification of 12 new yeast mitochondrial ribosomal proteins including 6 that have no prokaryotic homologues.</title>
        <authorList>
            <person name="Saveanu C."/>
            <person name="Fromont-Racine M."/>
            <person name="Harington A."/>
            <person name="Ricard F."/>
            <person name="Namane A."/>
            <person name="Jacquier A."/>
        </authorList>
    </citation>
    <scope>IDENTIFICATION IN THE MITOCHONDRIAL RIBOSOMAL SMALL COMPLEX</scope>
    <scope>IDENTIFICATION BY MASS SPECTROMETRY</scope>
</reference>
<reference key="8">
    <citation type="journal article" date="2002" name="Eur. J. Biochem.">
        <title>Tag-mediated isolation of yeast mitochondrial ribosome and mass spectrometric identification of its new components.</title>
        <authorList>
            <person name="Gan X."/>
            <person name="Kitakawa M."/>
            <person name="Yoshino K."/>
            <person name="Oshiro N."/>
            <person name="Yonezawa K."/>
            <person name="Isono K."/>
        </authorList>
    </citation>
    <scope>IDENTIFICATION IN THE MITOCHONDRIAL RIBOSOMAL SMALL COMPLEX</scope>
    <scope>IDENTIFICATION BY MASS SPECTROMETRY</scope>
</reference>
<reference key="9">
    <citation type="journal article" date="2003" name="Proc. Natl. Acad. Sci. U.S.A.">
        <title>The proteome of Saccharomyces cerevisiae mitochondria.</title>
        <authorList>
            <person name="Sickmann A."/>
            <person name="Reinders J."/>
            <person name="Wagner Y."/>
            <person name="Joppich C."/>
            <person name="Zahedi R.P."/>
            <person name="Meyer H.E."/>
            <person name="Schoenfisch B."/>
            <person name="Perschil I."/>
            <person name="Chacinska A."/>
            <person name="Guiard B."/>
            <person name="Rehling P."/>
            <person name="Pfanner N."/>
            <person name="Meisinger C."/>
        </authorList>
    </citation>
    <scope>SUBCELLULAR LOCATION [LARGE SCALE ANALYSIS]</scope>
    <source>
        <strain>ATCC 76625 / YPH499</strain>
    </source>
</reference>
<reference key="10">
    <citation type="journal article" date="2015" name="Nat. Commun.">
        <title>Organization of the mitochondrial translation machinery studied in situ by cryoelectron tomography.</title>
        <authorList>
            <person name="Pfeffer S."/>
            <person name="Woellhaf M.W."/>
            <person name="Herrmann J.M."/>
            <person name="Forster F."/>
        </authorList>
    </citation>
    <scope>SUBCELLULAR LOCATION</scope>
</reference>
<reference key="11">
    <citation type="journal article" date="2017" name="Science">
        <title>The structure of the yeast mitochondrial ribosome.</title>
        <authorList>
            <person name="Desai N."/>
            <person name="Brown A."/>
            <person name="Amunts A."/>
            <person name="Ramakrishnan V."/>
        </authorList>
    </citation>
    <scope>STRUCTURE BY ELECTRON MICROSCOPY (3.25 ANGSTROMS)</scope>
    <scope>SUBUNIT</scope>
</reference>
<dbReference type="EMBL" id="V00705">
    <property type="protein sequence ID" value="CAA24077.1"/>
    <property type="molecule type" value="Genomic_DNA"/>
</dbReference>
<dbReference type="EMBL" id="L36900">
    <property type="protein sequence ID" value="AAA67536.1"/>
    <property type="molecule type" value="Genomic_DNA"/>
</dbReference>
<dbReference type="EMBL" id="AJ010480">
    <property type="protein sequence ID" value="CAA09218.1"/>
    <property type="molecule type" value="Genomic_DNA"/>
</dbReference>
<dbReference type="EMBL" id="KP263414">
    <property type="protein sequence ID" value="AIZ98895.1"/>
    <property type="molecule type" value="Genomic_DNA"/>
</dbReference>
<dbReference type="PIR" id="S78670">
    <property type="entry name" value="R3BYM1"/>
</dbReference>
<dbReference type="RefSeq" id="NP_009320.1">
    <property type="nucleotide sequence ID" value="NC_001224.1"/>
</dbReference>
<dbReference type="PDB" id="5MRC">
    <property type="method" value="EM"/>
    <property type="resolution" value="3.25 A"/>
    <property type="chains" value="CC=1-398"/>
</dbReference>
<dbReference type="PDB" id="5MRE">
    <property type="method" value="EM"/>
    <property type="resolution" value="3.75 A"/>
    <property type="chains" value="CC=1-398"/>
</dbReference>
<dbReference type="PDB" id="5MRF">
    <property type="method" value="EM"/>
    <property type="resolution" value="4.97 A"/>
    <property type="chains" value="CC=1-398"/>
</dbReference>
<dbReference type="PDB" id="8D8K">
    <property type="method" value="EM"/>
    <property type="resolution" value="3.13 A"/>
    <property type="chains" value="C=1-398"/>
</dbReference>
<dbReference type="PDB" id="8D8L">
    <property type="method" value="EM"/>
    <property type="resolution" value="2.60 A"/>
    <property type="chains" value="C=1-398"/>
</dbReference>
<dbReference type="PDB" id="8OM2">
    <property type="method" value="EM"/>
    <property type="resolution" value="2.57 A"/>
    <property type="chains" value="C=1-398"/>
</dbReference>
<dbReference type="PDB" id="8OM3">
    <property type="method" value="EM"/>
    <property type="resolution" value="2.87 A"/>
    <property type="chains" value="C=1-398"/>
</dbReference>
<dbReference type="PDB" id="8OM4">
    <property type="method" value="EM"/>
    <property type="resolution" value="2.32 A"/>
    <property type="chains" value="C=1-398"/>
</dbReference>
<dbReference type="PDBsum" id="5MRC"/>
<dbReference type="PDBsum" id="5MRE"/>
<dbReference type="PDBsum" id="5MRF"/>
<dbReference type="PDBsum" id="8D8K"/>
<dbReference type="PDBsum" id="8D8L"/>
<dbReference type="PDBsum" id="8OM2"/>
<dbReference type="PDBsum" id="8OM3"/>
<dbReference type="PDBsum" id="8OM4"/>
<dbReference type="EMDB" id="EMD-16966"/>
<dbReference type="EMDB" id="EMD-16967"/>
<dbReference type="EMDB" id="EMD-16968"/>
<dbReference type="EMDB" id="EMD-27250"/>
<dbReference type="EMDB" id="EMD-27251"/>
<dbReference type="EMDB" id="EMD-3551"/>
<dbReference type="EMDB" id="EMD-3552"/>
<dbReference type="EMDB" id="EMD-3553"/>
<dbReference type="SMR" id="P02381"/>
<dbReference type="BioGRID" id="34782">
    <property type="interactions" value="268"/>
</dbReference>
<dbReference type="ComplexPortal" id="CPX-1603">
    <property type="entry name" value="37S mitochondrial small ribosomal subunit"/>
</dbReference>
<dbReference type="FunCoup" id="P02381">
    <property type="interactions" value="95"/>
</dbReference>
<dbReference type="IntAct" id="P02381">
    <property type="interactions" value="36"/>
</dbReference>
<dbReference type="STRING" id="4932.Q0140"/>
<dbReference type="iPTMnet" id="P02381"/>
<dbReference type="PaxDb" id="4932-Q0140"/>
<dbReference type="PeptideAtlas" id="P02381"/>
<dbReference type="EnsemblFungi" id="Q0140_mRNA">
    <property type="protein sequence ID" value="Q0140"/>
    <property type="gene ID" value="Q0140"/>
</dbReference>
<dbReference type="GeneID" id="854586"/>
<dbReference type="KEGG" id="sce:Q0140"/>
<dbReference type="AGR" id="SGD:S000007275"/>
<dbReference type="SGD" id="S000007275">
    <property type="gene designation" value="VAR1"/>
</dbReference>
<dbReference type="VEuPathDB" id="FungiDB:Q0140"/>
<dbReference type="eggNOG" id="ENOG502SVA8">
    <property type="taxonomic scope" value="Eukaryota"/>
</dbReference>
<dbReference type="HOGENOM" id="CLU_714008_0_0_1"/>
<dbReference type="InParanoid" id="P02381"/>
<dbReference type="OMA" id="YMNINND"/>
<dbReference type="OrthoDB" id="4070137at2759"/>
<dbReference type="BioCyc" id="YEAST:G3O-34384-MONOMER"/>
<dbReference type="PRO" id="PR:P02381"/>
<dbReference type="Proteomes" id="UP000002311">
    <property type="component" value="Mitochondrion"/>
</dbReference>
<dbReference type="RNAct" id="P02381">
    <property type="molecule type" value="protein"/>
</dbReference>
<dbReference type="GO" id="GO:0005743">
    <property type="term" value="C:mitochondrial inner membrane"/>
    <property type="evidence" value="ECO:0000303"/>
    <property type="project" value="ComplexPortal"/>
</dbReference>
<dbReference type="GO" id="GO:0005761">
    <property type="term" value="C:mitochondrial ribosome"/>
    <property type="evidence" value="ECO:0000314"/>
    <property type="project" value="SGD"/>
</dbReference>
<dbReference type="GO" id="GO:0005763">
    <property type="term" value="C:mitochondrial small ribosomal subunit"/>
    <property type="evidence" value="ECO:0000314"/>
    <property type="project" value="SGD"/>
</dbReference>
<dbReference type="GO" id="GO:0005739">
    <property type="term" value="C:mitochondrion"/>
    <property type="evidence" value="ECO:0007005"/>
    <property type="project" value="SGD"/>
</dbReference>
<dbReference type="GO" id="GO:0003735">
    <property type="term" value="F:structural constituent of ribosome"/>
    <property type="evidence" value="ECO:0000314"/>
    <property type="project" value="SGD"/>
</dbReference>
<dbReference type="GO" id="GO:0032543">
    <property type="term" value="P:mitochondrial translation"/>
    <property type="evidence" value="ECO:0000315"/>
    <property type="project" value="SGD"/>
</dbReference>
<dbReference type="InterPro" id="IPR007980">
    <property type="entry name" value="Ribosomal_uS3m_fun"/>
</dbReference>
<dbReference type="Pfam" id="PF05316">
    <property type="entry name" value="VAR1"/>
    <property type="match status" value="1"/>
</dbReference>
<keyword id="KW-0002">3D-structure</keyword>
<keyword id="KW-0496">Mitochondrion</keyword>
<keyword id="KW-1185">Reference proteome</keyword>
<keyword id="KW-0687">Ribonucleoprotein</keyword>
<keyword id="KW-0689">Ribosomal protein</keyword>
<sequence length="398" mass="47123">MKLKLLNMILSMMNKTNNNNNIIINNTLDSLMNKKLLLKNMLLDMNNKKMNNMKRMLNNNNMNPAGANPVVHRIGPAGNINNKLQHLNNMNNWNTQIYNYNKNMEIMNTMNDKLINKLLYKMMTLKLNNMNINKIIMSKTINQHSLNKLNIKFYYYNNDINNNNNNNNNNYYMNMMNKLMNIMNNNMNNNLCNILSYYYKKKVTIEPIKLSYIYLNSDIFSKYISLNDMDKYNNGILTNYQRMLNNIMPKLNDHNISMNYINNINNINNNKYNNMINLLNNNNNINNNNNYNNNNNNYIGNINNIYNNMTIDNIPMDILMYKYLVGWSIKFKGRLSNNNGRTSTTNLLNGTFNNKKYLWSNINNNYKLNYIPSNHNLYNNSNINKNGKYNIKVKLNFI</sequence>
<organism>
    <name type="scientific">Saccharomyces cerevisiae (strain ATCC 204508 / S288c)</name>
    <name type="common">Baker's yeast</name>
    <dbReference type="NCBI Taxonomy" id="559292"/>
    <lineage>
        <taxon>Eukaryota</taxon>
        <taxon>Fungi</taxon>
        <taxon>Dikarya</taxon>
        <taxon>Ascomycota</taxon>
        <taxon>Saccharomycotina</taxon>
        <taxon>Saccharomycetes</taxon>
        <taxon>Saccharomycetales</taxon>
        <taxon>Saccharomycetaceae</taxon>
        <taxon>Saccharomyces</taxon>
    </lineage>
</organism>